<sequence>FLPGLLAGLL</sequence>
<dbReference type="GO" id="GO:0005576">
    <property type="term" value="C:extracellular region"/>
    <property type="evidence" value="ECO:0000314"/>
    <property type="project" value="UniProtKB"/>
</dbReference>
<name>TP1E_PELRI</name>
<accession>C0HL06</accession>
<evidence type="ECO:0000250" key="1">
    <source>
        <dbReference type="UniProtKB" id="C0HJB9"/>
    </source>
</evidence>
<evidence type="ECO:0000269" key="2">
    <source>
    </source>
</evidence>
<evidence type="ECO:0000303" key="3">
    <source>
    </source>
</evidence>
<evidence type="ECO:0000305" key="4"/>
<evidence type="ECO:0000305" key="5">
    <source>
    </source>
</evidence>
<protein>
    <recommendedName>
        <fullName evidence="3">Temporin-1Re</fullName>
    </recommendedName>
</protein>
<comment type="function">
    <text evidence="1">Antimicrobial peptide.</text>
</comment>
<comment type="subcellular location">
    <subcellularLocation>
        <location evidence="2">Secreted</location>
    </subcellularLocation>
</comment>
<comment type="tissue specificity">
    <text evidence="5">Expressed by the skin glands.</text>
</comment>
<comment type="mass spectrometry"/>
<comment type="similarity">
    <text evidence="4">Belongs to the frog skin active peptide (FSAP) family. Temporin subfamily.</text>
</comment>
<keyword id="KW-0027">Amidation</keyword>
<keyword id="KW-0929">Antimicrobial</keyword>
<keyword id="KW-0903">Direct protein sequencing</keyword>
<keyword id="KW-0964">Secreted</keyword>
<reference evidence="4" key="1">
    <citation type="journal article" date="2017" name="Anal. Bioanal. Chem.">
        <title>Differentiation of frogs from two populations belonging to the Pelophylax esculentus complex by LC-MS/MS comparison of their skin peptidomes.</title>
        <authorList>
            <person name="Samgina T.Y."/>
            <person name="Artemenko K.A."/>
            <person name="Bergquist J."/>
            <person name="Trebse P."/>
            <person name="Torkar G."/>
            <person name="Tolpina M.D."/>
            <person name="Lebedev A.T."/>
        </authorList>
    </citation>
    <scope>PROTEIN SEQUENCE</scope>
    <scope>SUBCELLULAR LOCATION</scope>
    <scope>MASS SPECTROMETRY</scope>
    <scope>IDENTIFICATION BY MASS SPECTROMETRY</scope>
    <scope>AMIDATION AT LEU-10</scope>
    <source>
        <tissue evidence="3">Skin secretion</tissue>
    </source>
</reference>
<organism evidence="3">
    <name type="scientific">Pelophylax ridibundus</name>
    <name type="common">Marsh frog</name>
    <name type="synonym">Rana ridibunda</name>
    <dbReference type="NCBI Taxonomy" id="8406"/>
    <lineage>
        <taxon>Eukaryota</taxon>
        <taxon>Metazoa</taxon>
        <taxon>Chordata</taxon>
        <taxon>Craniata</taxon>
        <taxon>Vertebrata</taxon>
        <taxon>Euteleostomi</taxon>
        <taxon>Amphibia</taxon>
        <taxon>Batrachia</taxon>
        <taxon>Anura</taxon>
        <taxon>Neobatrachia</taxon>
        <taxon>Ranoidea</taxon>
        <taxon>Ranidae</taxon>
        <taxon>Pelophylax</taxon>
    </lineage>
</organism>
<feature type="peptide" id="PRO_0000442758" description="Temporin-1Re" evidence="2">
    <location>
        <begin position="1"/>
        <end position="10"/>
    </location>
</feature>
<feature type="modified residue" description="Leucine amide" evidence="2">
    <location>
        <position position="10"/>
    </location>
</feature>
<proteinExistence type="evidence at protein level"/>